<comment type="function">
    <text evidence="2">E3 ubiquitin-protein ligase that is required for specification of R7 photoreceptor cell fate in the eye by mediating the ubiquitination and subsequent proteasomal degradation of Tramtrack (ttk). E3 Ubiquitin ligases accept ubiquitin from an E2 ubiquitin-conjugating enzyme in the form of a thioester and then directly transfers the ubiquitin to targeted substrates. Acts via the formation of a complex with ebi and phyl that ubiquitinates the transcription repressor ttk, a general inhibitor of photoreceptor differentiation, in a subset of photoreceptor cells in the eye, leading to the differentiation of cells into neurons. Also involved in external sensory organ development.</text>
</comment>
<comment type="catalytic activity">
    <reaction>
        <text>S-ubiquitinyl-[E2 ubiquitin-conjugating enzyme]-L-cysteine + [acceptor protein]-L-lysine = [E2 ubiquitin-conjugating enzyme]-L-cysteine + N(6)-ubiquitinyl-[acceptor protein]-L-lysine.</text>
        <dbReference type="EC" id="2.3.2.27"/>
    </reaction>
</comment>
<comment type="pathway">
    <text>Protein modification; protein ubiquitination.</text>
</comment>
<comment type="subunit">
    <text evidence="2">Component of some E3 complex at least composed of sina, ebi and phyl. Interacts with eff.</text>
</comment>
<comment type="subcellular location">
    <subcellularLocation>
        <location evidence="2">Cytoplasm</location>
    </subcellularLocation>
    <subcellularLocation>
        <location evidence="2">Nucleus</location>
    </subcellularLocation>
</comment>
<comment type="domain">
    <text evidence="1">The RING-type zinc finger domain is essential for ubiquitin ligase activity.</text>
</comment>
<comment type="domain">
    <text evidence="1">The SBD domain (substrate-binding domain) mediates the interaction with substrate proteins. It is related to the TRAF family.</text>
</comment>
<comment type="similarity">
    <text evidence="6">Belongs to the SINA (Seven in absentia) family.</text>
</comment>
<sequence length="331" mass="34964">MSNKINPKRREPTAAAAAAVAAGVGGGVGGGASGVATANTNTTGSSSTGGSSSAGTTSSANTSSSSSSSLSSAGGGDAGMSADLTSLFECPVCFDYVLPPILQCSSGHLVCVSCRSKLTCCPTCRGPLANIRNLAMEKVASNVKFPCKHSGYGCTASLVYTEKTEHEETCECRPYLCPCPGASCKWQGPLDLVMQHLMMSHKSITTLQGEDIVFLATDINLPGAVDWVMMQSCFGHHFMLVLEKQEKYDGHQQFFAIVQLIGSRKEAENFVYRLELNGNRRRLTWEAMPRSIHEGVASAIHNSDCLVFDTSIAQLFADNGNLGINVTISLV</sequence>
<evidence type="ECO:0000250" key="1"/>
<evidence type="ECO:0000250" key="2">
    <source>
        <dbReference type="UniProtKB" id="P21461"/>
    </source>
</evidence>
<evidence type="ECO:0000255" key="3">
    <source>
        <dbReference type="PROSITE-ProRule" id="PRU00175"/>
    </source>
</evidence>
<evidence type="ECO:0000255" key="4">
    <source>
        <dbReference type="PROSITE-ProRule" id="PRU00455"/>
    </source>
</evidence>
<evidence type="ECO:0000256" key="5">
    <source>
        <dbReference type="SAM" id="MobiDB-lite"/>
    </source>
</evidence>
<evidence type="ECO:0000305" key="6"/>
<feature type="chain" id="PRO_0000056177" description="E3 ubiquitin-protein ligase sina">
    <location>
        <begin position="1"/>
        <end position="331"/>
    </location>
</feature>
<feature type="zinc finger region" description="RING-type" evidence="3">
    <location>
        <begin position="90"/>
        <end position="125"/>
    </location>
</feature>
<feature type="zinc finger region" description="SIAH-type" evidence="4">
    <location>
        <begin position="142"/>
        <end position="202"/>
    </location>
</feature>
<feature type="region of interest" description="Disordered" evidence="5">
    <location>
        <begin position="32"/>
        <end position="72"/>
    </location>
</feature>
<feature type="region of interest" description="SBD">
    <location>
        <begin position="139"/>
        <end position="331"/>
    </location>
</feature>
<feature type="compositionally biased region" description="Low complexity" evidence="5">
    <location>
        <begin position="34"/>
        <end position="72"/>
    </location>
</feature>
<feature type="binding site" evidence="1">
    <location>
        <position position="147"/>
    </location>
    <ligand>
        <name>Zn(2+)</name>
        <dbReference type="ChEBI" id="CHEBI:29105"/>
        <label>1</label>
    </ligand>
</feature>
<feature type="binding site" evidence="1">
    <location>
        <position position="154"/>
    </location>
    <ligand>
        <name>Zn(2+)</name>
        <dbReference type="ChEBI" id="CHEBI:29105"/>
        <label>1</label>
    </ligand>
</feature>
<feature type="binding site" evidence="1">
    <location>
        <position position="166"/>
    </location>
    <ligand>
        <name>Zn(2+)</name>
        <dbReference type="ChEBI" id="CHEBI:29105"/>
        <label>1</label>
    </ligand>
</feature>
<feature type="binding site" evidence="1">
    <location>
        <position position="170"/>
    </location>
    <ligand>
        <name>Zn(2+)</name>
        <dbReference type="ChEBI" id="CHEBI:29105"/>
        <label>1</label>
    </ligand>
</feature>
<feature type="binding site" evidence="1">
    <location>
        <position position="177"/>
    </location>
    <ligand>
        <name>Zn(2+)</name>
        <dbReference type="ChEBI" id="CHEBI:29105"/>
        <label>2</label>
    </ligand>
</feature>
<feature type="binding site" evidence="1">
    <location>
        <position position="184"/>
    </location>
    <ligand>
        <name>Zn(2+)</name>
        <dbReference type="ChEBI" id="CHEBI:29105"/>
        <label>2</label>
    </ligand>
</feature>
<feature type="binding site" evidence="1">
    <location>
        <position position="196"/>
    </location>
    <ligand>
        <name>Zn(2+)</name>
        <dbReference type="ChEBI" id="CHEBI:29105"/>
        <label>2</label>
    </ligand>
</feature>
<feature type="binding site" evidence="1">
    <location>
        <position position="201"/>
    </location>
    <ligand>
        <name>Zn(2+)</name>
        <dbReference type="ChEBI" id="CHEBI:29105"/>
        <label>2</label>
    </ligand>
</feature>
<organism>
    <name type="scientific">Drosophila willistoni</name>
    <name type="common">Fruit fly</name>
    <dbReference type="NCBI Taxonomy" id="7260"/>
    <lineage>
        <taxon>Eukaryota</taxon>
        <taxon>Metazoa</taxon>
        <taxon>Ecdysozoa</taxon>
        <taxon>Arthropoda</taxon>
        <taxon>Hexapoda</taxon>
        <taxon>Insecta</taxon>
        <taxon>Pterygota</taxon>
        <taxon>Neoptera</taxon>
        <taxon>Endopterygota</taxon>
        <taxon>Diptera</taxon>
        <taxon>Brachycera</taxon>
        <taxon>Muscomorpha</taxon>
        <taxon>Ephydroidea</taxon>
        <taxon>Drosophilidae</taxon>
        <taxon>Drosophila</taxon>
        <taxon>Sophophora</taxon>
    </lineage>
</organism>
<name>SINA_DROWI</name>
<keyword id="KW-0963">Cytoplasm</keyword>
<keyword id="KW-0217">Developmental protein</keyword>
<keyword id="KW-0479">Metal-binding</keyword>
<keyword id="KW-0539">Nucleus</keyword>
<keyword id="KW-1185">Reference proteome</keyword>
<keyword id="KW-0716">Sensory transduction</keyword>
<keyword id="KW-0808">Transferase</keyword>
<keyword id="KW-0833">Ubl conjugation pathway</keyword>
<keyword id="KW-0844">Vision</keyword>
<keyword id="KW-0862">Zinc</keyword>
<keyword id="KW-0863">Zinc-finger</keyword>
<dbReference type="EC" id="2.3.2.27"/>
<dbReference type="EMBL" id="AY190961">
    <property type="protein sequence ID" value="AAO01124.1"/>
    <property type="molecule type" value="Genomic_DNA"/>
</dbReference>
<dbReference type="EMBL" id="CH963876">
    <property type="protein sequence ID" value="EDW76920.1"/>
    <property type="molecule type" value="Genomic_DNA"/>
</dbReference>
<dbReference type="SMR" id="Q8I147"/>
<dbReference type="STRING" id="7260.Q8I147"/>
<dbReference type="EnsemblMetazoa" id="FBtr0251523">
    <property type="protein sequence ID" value="FBpp0250015"/>
    <property type="gene ID" value="FBgn0064264"/>
</dbReference>
<dbReference type="EnsemblMetazoa" id="XM_002065898.4">
    <property type="protein sequence ID" value="XP_002065934.1"/>
    <property type="gene ID" value="LOC6642991"/>
</dbReference>
<dbReference type="GeneID" id="6642991"/>
<dbReference type="KEGG" id="dwi:6642991"/>
<dbReference type="CTD" id="39884"/>
<dbReference type="eggNOG" id="KOG3002">
    <property type="taxonomic scope" value="Eukaryota"/>
</dbReference>
<dbReference type="HOGENOM" id="CLU_028215_0_0_1"/>
<dbReference type="OMA" id="HSNTGCT"/>
<dbReference type="OrthoDB" id="941555at2759"/>
<dbReference type="PhylomeDB" id="Q8I147"/>
<dbReference type="UniPathway" id="UPA00143"/>
<dbReference type="Proteomes" id="UP000007798">
    <property type="component" value="Unassembled WGS sequence"/>
</dbReference>
<dbReference type="GO" id="GO:0005829">
    <property type="term" value="C:cytosol"/>
    <property type="evidence" value="ECO:0007669"/>
    <property type="project" value="EnsemblMetazoa"/>
</dbReference>
<dbReference type="GO" id="GO:0005634">
    <property type="term" value="C:nucleus"/>
    <property type="evidence" value="ECO:0000250"/>
    <property type="project" value="UniProtKB"/>
</dbReference>
<dbReference type="GO" id="GO:0000151">
    <property type="term" value="C:ubiquitin ligase complex"/>
    <property type="evidence" value="ECO:0007669"/>
    <property type="project" value="EnsemblMetazoa"/>
</dbReference>
<dbReference type="GO" id="GO:0042802">
    <property type="term" value="F:identical protein binding"/>
    <property type="evidence" value="ECO:0007669"/>
    <property type="project" value="EnsemblMetazoa"/>
</dbReference>
<dbReference type="GO" id="GO:0031624">
    <property type="term" value="F:ubiquitin conjugating enzyme binding"/>
    <property type="evidence" value="ECO:0007669"/>
    <property type="project" value="TreeGrafter"/>
</dbReference>
<dbReference type="GO" id="GO:0061630">
    <property type="term" value="F:ubiquitin protein ligase activity"/>
    <property type="evidence" value="ECO:0007669"/>
    <property type="project" value="EnsemblMetazoa"/>
</dbReference>
<dbReference type="GO" id="GO:0008270">
    <property type="term" value="F:zinc ion binding"/>
    <property type="evidence" value="ECO:0007669"/>
    <property type="project" value="UniProtKB-KW"/>
</dbReference>
<dbReference type="GO" id="GO:0035883">
    <property type="term" value="P:enteroendocrine cell differentiation"/>
    <property type="evidence" value="ECO:0007669"/>
    <property type="project" value="EnsemblMetazoa"/>
</dbReference>
<dbReference type="GO" id="GO:0032436">
    <property type="term" value="P:positive regulation of proteasomal ubiquitin-dependent protein catabolic process"/>
    <property type="evidence" value="ECO:0007669"/>
    <property type="project" value="EnsemblMetazoa"/>
</dbReference>
<dbReference type="GO" id="GO:0043161">
    <property type="term" value="P:proteasome-mediated ubiquitin-dependent protein catabolic process"/>
    <property type="evidence" value="ECO:0007669"/>
    <property type="project" value="EnsemblMetazoa"/>
</dbReference>
<dbReference type="GO" id="GO:0016567">
    <property type="term" value="P:protein ubiquitination"/>
    <property type="evidence" value="ECO:0007669"/>
    <property type="project" value="UniProtKB-UniPathway"/>
</dbReference>
<dbReference type="GO" id="GO:0045676">
    <property type="term" value="P:regulation of R7 cell differentiation"/>
    <property type="evidence" value="ECO:0000250"/>
    <property type="project" value="UniProtKB"/>
</dbReference>
<dbReference type="GO" id="GO:0007423">
    <property type="term" value="P:sensory organ development"/>
    <property type="evidence" value="ECO:0000250"/>
    <property type="project" value="UniProtKB"/>
</dbReference>
<dbReference type="GO" id="GO:0045500">
    <property type="term" value="P:sevenless signaling pathway"/>
    <property type="evidence" value="ECO:0007669"/>
    <property type="project" value="EnsemblMetazoa"/>
</dbReference>
<dbReference type="GO" id="GO:0006511">
    <property type="term" value="P:ubiquitin-dependent protein catabolic process"/>
    <property type="evidence" value="ECO:0000250"/>
    <property type="project" value="UniProtKB"/>
</dbReference>
<dbReference type="GO" id="GO:0007601">
    <property type="term" value="P:visual perception"/>
    <property type="evidence" value="ECO:0007669"/>
    <property type="project" value="UniProtKB-KW"/>
</dbReference>
<dbReference type="CDD" id="cd03829">
    <property type="entry name" value="Sina"/>
    <property type="match status" value="1"/>
</dbReference>
<dbReference type="FunFam" id="2.60.210.10:FF:000002">
    <property type="entry name" value="E3 ubiquitin-protein ligase"/>
    <property type="match status" value="1"/>
</dbReference>
<dbReference type="FunFam" id="3.30.40.10:FF:000063">
    <property type="entry name" value="E3 ubiquitin-protein ligase"/>
    <property type="match status" value="1"/>
</dbReference>
<dbReference type="FunFam" id="3.30.40.10:FF:000041">
    <property type="entry name" value="E3 ubiquitin-protein ligase SINAT3"/>
    <property type="match status" value="1"/>
</dbReference>
<dbReference type="Gene3D" id="2.60.210.10">
    <property type="entry name" value="Apoptosis, Tumor Necrosis Factor Receptor Associated Protein 2, Chain A"/>
    <property type="match status" value="1"/>
</dbReference>
<dbReference type="Gene3D" id="3.30.40.10">
    <property type="entry name" value="Zinc/RING finger domain, C3HC4 (zinc finger)"/>
    <property type="match status" value="2"/>
</dbReference>
<dbReference type="InterPro" id="IPR018121">
    <property type="entry name" value="7-in-absentia-prot_TRAF-dom"/>
</dbReference>
<dbReference type="InterPro" id="IPR004162">
    <property type="entry name" value="SINA-like_animal"/>
</dbReference>
<dbReference type="InterPro" id="IPR049548">
    <property type="entry name" value="Sina-like_RING"/>
</dbReference>
<dbReference type="InterPro" id="IPR006311">
    <property type="entry name" value="TAT_signal"/>
</dbReference>
<dbReference type="InterPro" id="IPR008974">
    <property type="entry name" value="TRAF-like"/>
</dbReference>
<dbReference type="InterPro" id="IPR001841">
    <property type="entry name" value="Znf_RING"/>
</dbReference>
<dbReference type="InterPro" id="IPR013083">
    <property type="entry name" value="Znf_RING/FYVE/PHD"/>
</dbReference>
<dbReference type="InterPro" id="IPR013010">
    <property type="entry name" value="Znf_SIAH"/>
</dbReference>
<dbReference type="PANTHER" id="PTHR45877">
    <property type="entry name" value="E3 UBIQUITIN-PROTEIN LIGASE SIAH2"/>
    <property type="match status" value="1"/>
</dbReference>
<dbReference type="PANTHER" id="PTHR45877:SF2">
    <property type="entry name" value="E3 UBIQUITIN-PROTEIN LIGASE SINA-RELATED"/>
    <property type="match status" value="1"/>
</dbReference>
<dbReference type="Pfam" id="PF21362">
    <property type="entry name" value="Sina_RING"/>
    <property type="match status" value="1"/>
</dbReference>
<dbReference type="Pfam" id="PF03145">
    <property type="entry name" value="Sina_TRAF"/>
    <property type="match status" value="1"/>
</dbReference>
<dbReference type="Pfam" id="PF21361">
    <property type="entry name" value="Sina_ZnF"/>
    <property type="match status" value="1"/>
</dbReference>
<dbReference type="SUPFAM" id="SSF57850">
    <property type="entry name" value="RING/U-box"/>
    <property type="match status" value="1"/>
</dbReference>
<dbReference type="SUPFAM" id="SSF49599">
    <property type="entry name" value="TRAF domain-like"/>
    <property type="match status" value="1"/>
</dbReference>
<dbReference type="PROSITE" id="PS50089">
    <property type="entry name" value="ZF_RING_2"/>
    <property type="match status" value="1"/>
</dbReference>
<dbReference type="PROSITE" id="PS51081">
    <property type="entry name" value="ZF_SIAH"/>
    <property type="match status" value="1"/>
</dbReference>
<proteinExistence type="inferred from homology"/>
<protein>
    <recommendedName>
        <fullName>E3 ubiquitin-protein ligase sina</fullName>
        <ecNumber>2.3.2.27</ecNumber>
    </recommendedName>
    <alternativeName>
        <fullName evidence="6">RING-type E3 ubiquitin transferase sina</fullName>
    </alternativeName>
    <alternativeName>
        <fullName>Seven in absentia protein</fullName>
    </alternativeName>
</protein>
<reference key="1">
    <citation type="journal article" date="2002" name="Genome Biol.">
        <title>Assessing the impact of comparative genomic sequence data on the functional annotation of the Drosophila genome.</title>
        <authorList>
            <person name="Bergman C.M."/>
            <person name="Pfeiffer B.D."/>
            <person name="Rincon-Limas D.E."/>
            <person name="Hoskins R.A."/>
            <person name="Gnirke A."/>
            <person name="Mungall C.J."/>
            <person name="Wang A.M."/>
            <person name="Kronmiller B."/>
            <person name="Pacleb J.M."/>
            <person name="Park S."/>
            <person name="Stapleton M."/>
            <person name="Wan K.H."/>
            <person name="George R.A."/>
            <person name="de Jong P.J."/>
            <person name="Botas J."/>
            <person name="Rubin G.M."/>
            <person name="Celniker S.E."/>
        </authorList>
    </citation>
    <scope>NUCLEOTIDE SEQUENCE [GENOMIC DNA]</scope>
    <source>
        <strain>Tucson 14030-0814.10</strain>
    </source>
</reference>
<reference key="2">
    <citation type="journal article" date="2007" name="Nature">
        <title>Evolution of genes and genomes on the Drosophila phylogeny.</title>
        <authorList>
            <consortium name="Drosophila 12 genomes consortium"/>
        </authorList>
    </citation>
    <scope>NUCLEOTIDE SEQUENCE [LARGE SCALE GENOMIC DNA]</scope>
    <source>
        <strain>Tucson 14030-0811.24</strain>
    </source>
</reference>
<accession>Q8I147</accession>
<accession>B4MX87</accession>
<gene>
    <name type="primary">sina</name>
    <name type="ORF">GK20872</name>
</gene>